<comment type="function">
    <text evidence="1">The SecYEG-SecDF-YajC-YidC holo-translocon (HTL) protein secretase/insertase is a supercomplex required for protein secretion, insertion of proteins into membranes, and assembly of membrane protein complexes. While the SecYEG complex is essential for assembly of a number of proteins and complexes, the SecDF-YajC-YidC subcomplex facilitates these functions.</text>
</comment>
<comment type="subunit">
    <text evidence="1">Part of the SecDF-YidC-YajC translocase complex. The SecDF-YidC-YajC translocase forms a supercomplex with SecYEG, called the holo-translocon (HTL).</text>
</comment>
<comment type="subcellular location">
    <subcellularLocation>
        <location evidence="1">Cell inner membrane</location>
        <topology evidence="1">Single-pass membrane protein</topology>
    </subcellularLocation>
</comment>
<comment type="similarity">
    <text evidence="3">Belongs to the YajC family.</text>
</comment>
<keyword id="KW-0997">Cell inner membrane</keyword>
<keyword id="KW-1003">Cell membrane</keyword>
<keyword id="KW-0472">Membrane</keyword>
<keyword id="KW-0653">Protein transport</keyword>
<keyword id="KW-0811">Translocation</keyword>
<keyword id="KW-0812">Transmembrane</keyword>
<keyword id="KW-1133">Transmembrane helix</keyword>
<keyword id="KW-0813">Transport</keyword>
<gene>
    <name type="primary">yajC</name>
    <name type="ordered locus">RC0893</name>
</gene>
<proteinExistence type="inferred from homology"/>
<protein>
    <recommendedName>
        <fullName>Sec translocon accessory complex subunit YajC</fullName>
    </recommendedName>
</protein>
<sequence>MSANTQDNQANNNDTIEIQETEVVPAETNSLQSGLTSLIPMVLIFAVFYFLLLRPQETRRKEREKLVSEVKKGEEVLTNSGIYGIVTKVSENDNNIEIEIAKDVRIKVLKSAIIDITSRTKEVAVKKENKKNKKVSGAKAS</sequence>
<name>YAJC_RICCN</name>
<evidence type="ECO:0000250" key="1">
    <source>
        <dbReference type="UniProtKB" id="P0ADZ7"/>
    </source>
</evidence>
<evidence type="ECO:0000255" key="2"/>
<evidence type="ECO:0000305" key="3"/>
<organism>
    <name type="scientific">Rickettsia conorii (strain ATCC VR-613 / Malish 7)</name>
    <dbReference type="NCBI Taxonomy" id="272944"/>
    <lineage>
        <taxon>Bacteria</taxon>
        <taxon>Pseudomonadati</taxon>
        <taxon>Pseudomonadota</taxon>
        <taxon>Alphaproteobacteria</taxon>
        <taxon>Rickettsiales</taxon>
        <taxon>Rickettsiaceae</taxon>
        <taxon>Rickettsieae</taxon>
        <taxon>Rickettsia</taxon>
        <taxon>spotted fever group</taxon>
    </lineage>
</organism>
<reference key="1">
    <citation type="journal article" date="2001" name="Science">
        <title>Mechanisms of evolution in Rickettsia conorii and R. prowazekii.</title>
        <authorList>
            <person name="Ogata H."/>
            <person name="Audic S."/>
            <person name="Renesto-Audiffren P."/>
            <person name="Fournier P.-E."/>
            <person name="Barbe V."/>
            <person name="Samson D."/>
            <person name="Roux V."/>
            <person name="Cossart P."/>
            <person name="Weissenbach J."/>
            <person name="Claverie J.-M."/>
            <person name="Raoult D."/>
        </authorList>
    </citation>
    <scope>NUCLEOTIDE SEQUENCE [LARGE SCALE GENOMIC DNA]</scope>
    <source>
        <strain>ATCC VR-613 / Malish 7</strain>
    </source>
</reference>
<feature type="chain" id="PRO_0000282378" description="Sec translocon accessory complex subunit YajC">
    <location>
        <begin position="1"/>
        <end position="141"/>
    </location>
</feature>
<feature type="transmembrane region" description="Helical" evidence="2">
    <location>
        <begin position="33"/>
        <end position="53"/>
    </location>
</feature>
<accession>Q92H78</accession>
<dbReference type="EMBL" id="AE006914">
    <property type="protein sequence ID" value="AAL03431.1"/>
    <property type="molecule type" value="Genomic_DNA"/>
</dbReference>
<dbReference type="PIR" id="E97811">
    <property type="entry name" value="E97811"/>
</dbReference>
<dbReference type="RefSeq" id="WP_004998024.1">
    <property type="nucleotide sequence ID" value="NC_003103.1"/>
</dbReference>
<dbReference type="SMR" id="Q92H78"/>
<dbReference type="GeneID" id="95361398"/>
<dbReference type="KEGG" id="rco:RC0893"/>
<dbReference type="HOGENOM" id="CLU_116157_0_0_5"/>
<dbReference type="Proteomes" id="UP000000816">
    <property type="component" value="Chromosome"/>
</dbReference>
<dbReference type="GO" id="GO:0005886">
    <property type="term" value="C:plasma membrane"/>
    <property type="evidence" value="ECO:0007669"/>
    <property type="project" value="UniProtKB-SubCell"/>
</dbReference>
<dbReference type="GO" id="GO:0015031">
    <property type="term" value="P:protein transport"/>
    <property type="evidence" value="ECO:0007669"/>
    <property type="project" value="UniProtKB-KW"/>
</dbReference>
<dbReference type="InterPro" id="IPR003849">
    <property type="entry name" value="Preprotein_translocase_YajC"/>
</dbReference>
<dbReference type="NCBIfam" id="TIGR00739">
    <property type="entry name" value="yajC"/>
    <property type="match status" value="1"/>
</dbReference>
<dbReference type="PANTHER" id="PTHR33909">
    <property type="entry name" value="SEC TRANSLOCON ACCESSORY COMPLEX SUBUNIT YAJC"/>
    <property type="match status" value="1"/>
</dbReference>
<dbReference type="PANTHER" id="PTHR33909:SF1">
    <property type="entry name" value="SEC TRANSLOCON ACCESSORY COMPLEX SUBUNIT YAJC"/>
    <property type="match status" value="1"/>
</dbReference>
<dbReference type="Pfam" id="PF02699">
    <property type="entry name" value="YajC"/>
    <property type="match status" value="1"/>
</dbReference>
<dbReference type="PRINTS" id="PR01853">
    <property type="entry name" value="YAJCTRNLCASE"/>
</dbReference>
<dbReference type="SMART" id="SM01323">
    <property type="entry name" value="YajC"/>
    <property type="match status" value="1"/>
</dbReference>